<sequence length="313" mass="34371">MSHSRHRAEAPPLQREDSGTFSLGKMITAKPGKTPIQVLHEYGMKTKNIPVYECERSDVQVHVPTFTFRVTVGDITCTGEGTSKKLAKHRAAEAAINILKANASICFAVPDPLMPDPSKQPKNQLNPIGSLQELAIHHGWRLPEYTLSQEGGPAHKREYTTICRLESFMETGKGASKKQAKRNAAEKFLAKFSNISPENHISLTNVVGHSLGCTWHSLRNSPGEKINLLKRSLLSLPNTDYIQLLSEIASEQGFNITYLDIEELSANGQYQCLAELSTSPITVCHGSGISCGNAQSDAAHNALQYLKIIAERK</sequence>
<protein>
    <recommendedName>
        <fullName>Interferon-inducible double-stranded RNA-dependent protein kinase activator A</fullName>
    </recommendedName>
    <alternativeName>
        <fullName>PKR-associated protein X</fullName>
    </alternativeName>
    <alternativeName>
        <fullName>PKR-associating protein X</fullName>
        <shortName>RAX</shortName>
    </alternativeName>
    <alternativeName>
        <fullName>Protein activator of the interferon-induced protein kinase</fullName>
    </alternativeName>
    <alternativeName>
        <fullName>Protein kinase, interferon-inducible double-stranded RNA-dependent activator</fullName>
    </alternativeName>
</protein>
<proteinExistence type="evidence at protein level"/>
<evidence type="ECO:0000250" key="1"/>
<evidence type="ECO:0000250" key="2">
    <source>
        <dbReference type="UniProtKB" id="O75569"/>
    </source>
</evidence>
<evidence type="ECO:0000255" key="3">
    <source>
        <dbReference type="PROSITE-ProRule" id="PRU00266"/>
    </source>
</evidence>
<evidence type="ECO:0000256" key="4">
    <source>
        <dbReference type="SAM" id="MobiDB-lite"/>
    </source>
</evidence>
<evidence type="ECO:0000269" key="5">
    <source>
    </source>
</evidence>
<evidence type="ECO:0000269" key="6">
    <source>
    </source>
</evidence>
<evidence type="ECO:0000305" key="7"/>
<dbReference type="EMBL" id="AF083032">
    <property type="protein sequence ID" value="AAD33098.1"/>
    <property type="molecule type" value="mRNA"/>
</dbReference>
<dbReference type="EMBL" id="AK012798">
    <property type="protein sequence ID" value="BAB28477.1"/>
    <property type="molecule type" value="mRNA"/>
</dbReference>
<dbReference type="EMBL" id="AK155112">
    <property type="protein sequence ID" value="BAE33056.1"/>
    <property type="molecule type" value="mRNA"/>
</dbReference>
<dbReference type="EMBL" id="BC011311">
    <property type="protein sequence ID" value="AAH11311.1"/>
    <property type="molecule type" value="mRNA"/>
</dbReference>
<dbReference type="CCDS" id="CCDS16159.1"/>
<dbReference type="RefSeq" id="NP_036001.1">
    <property type="nucleotide sequence ID" value="NM_011871.4"/>
</dbReference>
<dbReference type="SMR" id="Q9WTX2"/>
<dbReference type="BioGRID" id="204842">
    <property type="interactions" value="11"/>
</dbReference>
<dbReference type="ComplexPortal" id="CPX-1073">
    <property type="entry name" value="RISC-loading complex, PRKRA variant"/>
</dbReference>
<dbReference type="FunCoup" id="Q9WTX2">
    <property type="interactions" value="1614"/>
</dbReference>
<dbReference type="IntAct" id="Q9WTX2">
    <property type="interactions" value="1"/>
</dbReference>
<dbReference type="MINT" id="Q9WTX2"/>
<dbReference type="STRING" id="10090.ENSMUSP00000002808"/>
<dbReference type="GlyGen" id="Q9WTX2">
    <property type="glycosylation" value="2 sites, 1 O-linked glycan (1 site)"/>
</dbReference>
<dbReference type="iPTMnet" id="Q9WTX2"/>
<dbReference type="PhosphoSitePlus" id="Q9WTX2"/>
<dbReference type="SwissPalm" id="Q9WTX2"/>
<dbReference type="jPOST" id="Q9WTX2"/>
<dbReference type="PaxDb" id="10090-ENSMUSP00000002808"/>
<dbReference type="PeptideAtlas" id="Q9WTX2"/>
<dbReference type="ProteomicsDB" id="289841"/>
<dbReference type="Pumba" id="Q9WTX2"/>
<dbReference type="Antibodypedia" id="3306">
    <property type="antibodies" value="375 antibodies from 37 providers"/>
</dbReference>
<dbReference type="DNASU" id="23992"/>
<dbReference type="Ensembl" id="ENSMUST00000002808.7">
    <property type="protein sequence ID" value="ENSMUSP00000002808.7"/>
    <property type="gene ID" value="ENSMUSG00000002731.7"/>
</dbReference>
<dbReference type="GeneID" id="23992"/>
<dbReference type="KEGG" id="mmu:23992"/>
<dbReference type="UCSC" id="uc008kff.1">
    <property type="organism name" value="mouse"/>
</dbReference>
<dbReference type="AGR" id="MGI:1344375"/>
<dbReference type="CTD" id="8575"/>
<dbReference type="MGI" id="MGI:1344375">
    <property type="gene designation" value="Prkra"/>
</dbReference>
<dbReference type="VEuPathDB" id="HostDB:ENSMUSG00000002731"/>
<dbReference type="eggNOG" id="KOG3732">
    <property type="taxonomic scope" value="Eukaryota"/>
</dbReference>
<dbReference type="GeneTree" id="ENSGT00940000157618"/>
<dbReference type="HOGENOM" id="CLU_048292_0_0_1"/>
<dbReference type="InParanoid" id="Q9WTX2"/>
<dbReference type="OMA" id="PEYEFEK"/>
<dbReference type="OrthoDB" id="10056847at2759"/>
<dbReference type="PhylomeDB" id="Q9WTX2"/>
<dbReference type="TreeFam" id="TF315953"/>
<dbReference type="Reactome" id="R-MMU-203927">
    <property type="pathway name" value="MicroRNA (miRNA) biogenesis"/>
</dbReference>
<dbReference type="Reactome" id="R-MMU-426486">
    <property type="pathway name" value="Small interfering RNA (siRNA) biogenesis"/>
</dbReference>
<dbReference type="Reactome" id="R-MMU-9833482">
    <property type="pathway name" value="PKR-mediated signaling"/>
</dbReference>
<dbReference type="BioGRID-ORCS" id="23992">
    <property type="hits" value="17 hits in 78 CRISPR screens"/>
</dbReference>
<dbReference type="PRO" id="PR:Q9WTX2"/>
<dbReference type="Proteomes" id="UP000000589">
    <property type="component" value="Chromosome 2"/>
</dbReference>
<dbReference type="RNAct" id="Q9WTX2">
    <property type="molecule type" value="protein"/>
</dbReference>
<dbReference type="Bgee" id="ENSMUSG00000002731">
    <property type="expression patterns" value="Expressed in dorsal pancreas and 253 other cell types or tissues"/>
</dbReference>
<dbReference type="GO" id="GO:0005737">
    <property type="term" value="C:cytoplasm"/>
    <property type="evidence" value="ECO:0000250"/>
    <property type="project" value="UniProtKB"/>
</dbReference>
<dbReference type="GO" id="GO:0005829">
    <property type="term" value="C:cytosol"/>
    <property type="evidence" value="ECO:0007669"/>
    <property type="project" value="Ensembl"/>
</dbReference>
<dbReference type="GO" id="GO:0005654">
    <property type="term" value="C:nucleoplasm"/>
    <property type="evidence" value="ECO:0007669"/>
    <property type="project" value="Ensembl"/>
</dbReference>
<dbReference type="GO" id="GO:0048471">
    <property type="term" value="C:perinuclear region of cytoplasm"/>
    <property type="evidence" value="ECO:0007669"/>
    <property type="project" value="UniProtKB-SubCell"/>
</dbReference>
<dbReference type="GO" id="GO:0070578">
    <property type="term" value="C:RISC-loading complex"/>
    <property type="evidence" value="ECO:0000266"/>
    <property type="project" value="ComplexPortal"/>
</dbReference>
<dbReference type="GO" id="GO:0003725">
    <property type="term" value="F:double-stranded RNA binding"/>
    <property type="evidence" value="ECO:0007669"/>
    <property type="project" value="Ensembl"/>
</dbReference>
<dbReference type="GO" id="GO:0019899">
    <property type="term" value="F:enzyme binding"/>
    <property type="evidence" value="ECO:0007669"/>
    <property type="project" value="Ensembl"/>
</dbReference>
<dbReference type="GO" id="GO:0070883">
    <property type="term" value="F:pre-miRNA binding"/>
    <property type="evidence" value="ECO:0007669"/>
    <property type="project" value="Ensembl"/>
</dbReference>
<dbReference type="GO" id="GO:0042803">
    <property type="term" value="F:protein homodimerization activity"/>
    <property type="evidence" value="ECO:0007669"/>
    <property type="project" value="Ensembl"/>
</dbReference>
<dbReference type="GO" id="GO:0030295">
    <property type="term" value="F:protein kinase activator activity"/>
    <property type="evidence" value="ECO:0007669"/>
    <property type="project" value="Ensembl"/>
</dbReference>
<dbReference type="GO" id="GO:0140374">
    <property type="term" value="P:antiviral innate immune response"/>
    <property type="evidence" value="ECO:0007669"/>
    <property type="project" value="Ensembl"/>
</dbReference>
<dbReference type="GO" id="GO:0034599">
    <property type="term" value="P:cellular response to oxidative stress"/>
    <property type="evidence" value="ECO:0000314"/>
    <property type="project" value="MGI"/>
</dbReference>
<dbReference type="GO" id="GO:0043583">
    <property type="term" value="P:ear development"/>
    <property type="evidence" value="ECO:0000315"/>
    <property type="project" value="MGI"/>
</dbReference>
<dbReference type="GO" id="GO:0042474">
    <property type="term" value="P:middle ear morphogenesis"/>
    <property type="evidence" value="ECO:0000315"/>
    <property type="project" value="MGI"/>
</dbReference>
<dbReference type="GO" id="GO:0035196">
    <property type="term" value="P:miRNA processing"/>
    <property type="evidence" value="ECO:0000266"/>
    <property type="project" value="ComplexPortal"/>
</dbReference>
<dbReference type="GO" id="GO:0042473">
    <property type="term" value="P:outer ear morphogenesis"/>
    <property type="evidence" value="ECO:0000315"/>
    <property type="project" value="MGI"/>
</dbReference>
<dbReference type="GO" id="GO:2001244">
    <property type="term" value="P:positive regulation of intrinsic apoptotic signaling pathway"/>
    <property type="evidence" value="ECO:0000314"/>
    <property type="project" value="MGI"/>
</dbReference>
<dbReference type="GO" id="GO:0031054">
    <property type="term" value="P:pre-miRNA processing"/>
    <property type="evidence" value="ECO:0000266"/>
    <property type="project" value="ComplexPortal"/>
</dbReference>
<dbReference type="GO" id="GO:0050821">
    <property type="term" value="P:protein stabilization"/>
    <property type="evidence" value="ECO:0007669"/>
    <property type="project" value="Ensembl"/>
</dbReference>
<dbReference type="GO" id="GO:0070922">
    <property type="term" value="P:RISC complex assembly"/>
    <property type="evidence" value="ECO:0000266"/>
    <property type="project" value="ComplexPortal"/>
</dbReference>
<dbReference type="GO" id="GO:0030422">
    <property type="term" value="P:siRNA processing"/>
    <property type="evidence" value="ECO:0000250"/>
    <property type="project" value="UniProtKB"/>
</dbReference>
<dbReference type="GO" id="GO:0048705">
    <property type="term" value="P:skeletal system morphogenesis"/>
    <property type="evidence" value="ECO:0000315"/>
    <property type="project" value="MGI"/>
</dbReference>
<dbReference type="CDD" id="cd19889">
    <property type="entry name" value="DSRM_PRKRA_rpt1"/>
    <property type="match status" value="1"/>
</dbReference>
<dbReference type="CDD" id="cd19891">
    <property type="entry name" value="DSRM_PRKRA_rpt2"/>
    <property type="match status" value="1"/>
</dbReference>
<dbReference type="CDD" id="cd19892">
    <property type="entry name" value="DSRM_PRKRA_rpt3"/>
    <property type="match status" value="1"/>
</dbReference>
<dbReference type="FunFam" id="3.30.160.20:FF:000005">
    <property type="entry name" value="Putative double-stranded RNA-specific adenosine deaminase"/>
    <property type="match status" value="1"/>
</dbReference>
<dbReference type="FunFam" id="3.30.160.20:FF:000019">
    <property type="entry name" value="RISC-loading complex subunit TARBP2"/>
    <property type="match status" value="1"/>
</dbReference>
<dbReference type="FunFam" id="3.30.160.20:FF:000018">
    <property type="entry name" value="RISC-loading complex subunit TARBP2 isoform X3"/>
    <property type="match status" value="1"/>
</dbReference>
<dbReference type="Gene3D" id="3.30.160.20">
    <property type="match status" value="3"/>
</dbReference>
<dbReference type="InterPro" id="IPR014720">
    <property type="entry name" value="dsRBD_dom"/>
</dbReference>
<dbReference type="InterPro" id="IPR044465">
    <property type="entry name" value="PRKRA_DSRM_1"/>
</dbReference>
<dbReference type="InterPro" id="IPR044466">
    <property type="entry name" value="PRKRA_DSRM_2"/>
</dbReference>
<dbReference type="InterPro" id="IPR044467">
    <property type="entry name" value="PRKRA_DSRM_3"/>
</dbReference>
<dbReference type="InterPro" id="IPR051247">
    <property type="entry name" value="RLC_Component"/>
</dbReference>
<dbReference type="PANTHER" id="PTHR46205:SF2">
    <property type="entry name" value="INTERFERON-INDUCIBLE DOUBLE-STRANDED RNA-DEPENDENT PROTEIN KINASE ACTIVATOR A"/>
    <property type="match status" value="1"/>
</dbReference>
<dbReference type="PANTHER" id="PTHR46205">
    <property type="entry name" value="LOQUACIOUS, ISOFORM B"/>
    <property type="match status" value="1"/>
</dbReference>
<dbReference type="Pfam" id="PF00035">
    <property type="entry name" value="dsrm"/>
    <property type="match status" value="2"/>
</dbReference>
<dbReference type="SMART" id="SM00358">
    <property type="entry name" value="DSRM"/>
    <property type="match status" value="3"/>
</dbReference>
<dbReference type="SUPFAM" id="SSF54768">
    <property type="entry name" value="dsRNA-binding domain-like"/>
    <property type="match status" value="3"/>
</dbReference>
<dbReference type="PROSITE" id="PS50137">
    <property type="entry name" value="DS_RBD"/>
    <property type="match status" value="3"/>
</dbReference>
<name>PRKRA_MOUSE</name>
<gene>
    <name type="primary">Prkra</name>
    <name type="synonym">Rax</name>
</gene>
<comment type="function">
    <text evidence="1 5 6">Required for siRNA production by DICER1 and for subsequent siRNA-mediated post-transcriptional gene silencing. Does not seem to be required for processing of pre-miRNA to miRNA by DICER1 (By similarity). Activates EIF2AK2/PKR in the absence of double-stranded RNA (dsRNA), leading to phosphorylation of EIF2S1/EFI2-alpha and inhibition of translation and induction of apoptosis. Promotes UBC9-p53/TP53 association and sumoylation and phosphorylation of p53/TP53 at 'Lys-386' at 'Ser-392' respectively and enhances its activity in a EIF2AK2/PKR-dependent manner.</text>
</comment>
<comment type="subunit">
    <text evidence="1 5 6">Homodimer. Interacts with DICER1, AGO2 and TARBP2. Also able to interact with dsRNA (By similarity). Interacts with EIF2AK2/PKR through its DRBM domains. Interacts with DUS2L (via DRBM domain) (By similarity). Interacts with UBC9. Forms a complex with UBC9 and p53/TP53.</text>
</comment>
<comment type="subcellular location">
    <subcellularLocation>
        <location evidence="1">Cytoplasm</location>
        <location evidence="1">Perinuclear region</location>
    </subcellularLocation>
    <subcellularLocation>
        <location evidence="1">Cytoplasm</location>
    </subcellularLocation>
</comment>
<comment type="tissue specificity">
    <text evidence="5">Expressed in brain, heart, kidney, liver, lung, muscle, spleen and testis.</text>
</comment>
<comment type="domain">
    <text evidence="1">Self-association may occur via interactions between DRBM domains as follows: DRBM 1/DRBM 1, DRBM 1/DRBM 2, DRBM 2/DRBM 2 or DRBM 3/DRBM3.</text>
</comment>
<comment type="PTM">
    <text evidence="1">Phosphorylated at Ser-246 in unstressed cells and at Ser-287 in stressed cells. Phosphorylation at Ser-246 appears to be a prerequisite for subsequent phosphorylation at Ser-287. Phosphorylation at Ser-246 and Ser-287 are necessary for activation of EIF2AK2/PKR under conditions of stress (By similarity).</text>
</comment>
<comment type="similarity">
    <text evidence="7">Belongs to the PRKRA family.</text>
</comment>
<reference key="1">
    <citation type="journal article" date="1999" name="J. Biol. Chem.">
        <title>RAX, a cellular activator for double-stranded RNA-dependent protein kinase during stress signaling.</title>
        <authorList>
            <person name="Ito T."/>
            <person name="Yang M."/>
            <person name="May W.S."/>
        </authorList>
    </citation>
    <scope>NUCLEOTIDE SEQUENCE [MRNA]</scope>
    <scope>FUNCTION</scope>
    <scope>INTERACTION WITH EIF2AK2</scope>
    <scope>TISSUE SPECIFICITY</scope>
    <scope>PHOSPHORYLATION</scope>
</reference>
<reference key="2">
    <citation type="journal article" date="2005" name="Science">
        <title>The transcriptional landscape of the mammalian genome.</title>
        <authorList>
            <person name="Carninci P."/>
            <person name="Kasukawa T."/>
            <person name="Katayama S."/>
            <person name="Gough J."/>
            <person name="Frith M.C."/>
            <person name="Maeda N."/>
            <person name="Oyama R."/>
            <person name="Ravasi T."/>
            <person name="Lenhard B."/>
            <person name="Wells C."/>
            <person name="Kodzius R."/>
            <person name="Shimokawa K."/>
            <person name="Bajic V.B."/>
            <person name="Brenner S.E."/>
            <person name="Batalov S."/>
            <person name="Forrest A.R."/>
            <person name="Zavolan M."/>
            <person name="Davis M.J."/>
            <person name="Wilming L.G."/>
            <person name="Aidinis V."/>
            <person name="Allen J.E."/>
            <person name="Ambesi-Impiombato A."/>
            <person name="Apweiler R."/>
            <person name="Aturaliya R.N."/>
            <person name="Bailey T.L."/>
            <person name="Bansal M."/>
            <person name="Baxter L."/>
            <person name="Beisel K.W."/>
            <person name="Bersano T."/>
            <person name="Bono H."/>
            <person name="Chalk A.M."/>
            <person name="Chiu K.P."/>
            <person name="Choudhary V."/>
            <person name="Christoffels A."/>
            <person name="Clutterbuck D.R."/>
            <person name="Crowe M.L."/>
            <person name="Dalla E."/>
            <person name="Dalrymple B.P."/>
            <person name="de Bono B."/>
            <person name="Della Gatta G."/>
            <person name="di Bernardo D."/>
            <person name="Down T."/>
            <person name="Engstrom P."/>
            <person name="Fagiolini M."/>
            <person name="Faulkner G."/>
            <person name="Fletcher C.F."/>
            <person name="Fukushima T."/>
            <person name="Furuno M."/>
            <person name="Futaki S."/>
            <person name="Gariboldi M."/>
            <person name="Georgii-Hemming P."/>
            <person name="Gingeras T.R."/>
            <person name="Gojobori T."/>
            <person name="Green R.E."/>
            <person name="Gustincich S."/>
            <person name="Harbers M."/>
            <person name="Hayashi Y."/>
            <person name="Hensch T.K."/>
            <person name="Hirokawa N."/>
            <person name="Hill D."/>
            <person name="Huminiecki L."/>
            <person name="Iacono M."/>
            <person name="Ikeo K."/>
            <person name="Iwama A."/>
            <person name="Ishikawa T."/>
            <person name="Jakt M."/>
            <person name="Kanapin A."/>
            <person name="Katoh M."/>
            <person name="Kawasawa Y."/>
            <person name="Kelso J."/>
            <person name="Kitamura H."/>
            <person name="Kitano H."/>
            <person name="Kollias G."/>
            <person name="Krishnan S.P."/>
            <person name="Kruger A."/>
            <person name="Kummerfeld S.K."/>
            <person name="Kurochkin I.V."/>
            <person name="Lareau L.F."/>
            <person name="Lazarevic D."/>
            <person name="Lipovich L."/>
            <person name="Liu J."/>
            <person name="Liuni S."/>
            <person name="McWilliam S."/>
            <person name="Madan Babu M."/>
            <person name="Madera M."/>
            <person name="Marchionni L."/>
            <person name="Matsuda H."/>
            <person name="Matsuzawa S."/>
            <person name="Miki H."/>
            <person name="Mignone F."/>
            <person name="Miyake S."/>
            <person name="Morris K."/>
            <person name="Mottagui-Tabar S."/>
            <person name="Mulder N."/>
            <person name="Nakano N."/>
            <person name="Nakauchi H."/>
            <person name="Ng P."/>
            <person name="Nilsson R."/>
            <person name="Nishiguchi S."/>
            <person name="Nishikawa S."/>
            <person name="Nori F."/>
            <person name="Ohara O."/>
            <person name="Okazaki Y."/>
            <person name="Orlando V."/>
            <person name="Pang K.C."/>
            <person name="Pavan W.J."/>
            <person name="Pavesi G."/>
            <person name="Pesole G."/>
            <person name="Petrovsky N."/>
            <person name="Piazza S."/>
            <person name="Reed J."/>
            <person name="Reid J.F."/>
            <person name="Ring B.Z."/>
            <person name="Ringwald M."/>
            <person name="Rost B."/>
            <person name="Ruan Y."/>
            <person name="Salzberg S.L."/>
            <person name="Sandelin A."/>
            <person name="Schneider C."/>
            <person name="Schoenbach C."/>
            <person name="Sekiguchi K."/>
            <person name="Semple C.A."/>
            <person name="Seno S."/>
            <person name="Sessa L."/>
            <person name="Sheng Y."/>
            <person name="Shibata Y."/>
            <person name="Shimada H."/>
            <person name="Shimada K."/>
            <person name="Silva D."/>
            <person name="Sinclair B."/>
            <person name="Sperling S."/>
            <person name="Stupka E."/>
            <person name="Sugiura K."/>
            <person name="Sultana R."/>
            <person name="Takenaka Y."/>
            <person name="Taki K."/>
            <person name="Tammoja K."/>
            <person name="Tan S.L."/>
            <person name="Tang S."/>
            <person name="Taylor M.S."/>
            <person name="Tegner J."/>
            <person name="Teichmann S.A."/>
            <person name="Ueda H.R."/>
            <person name="van Nimwegen E."/>
            <person name="Verardo R."/>
            <person name="Wei C.L."/>
            <person name="Yagi K."/>
            <person name="Yamanishi H."/>
            <person name="Zabarovsky E."/>
            <person name="Zhu S."/>
            <person name="Zimmer A."/>
            <person name="Hide W."/>
            <person name="Bult C."/>
            <person name="Grimmond S.M."/>
            <person name="Teasdale R.D."/>
            <person name="Liu E.T."/>
            <person name="Brusic V."/>
            <person name="Quackenbush J."/>
            <person name="Wahlestedt C."/>
            <person name="Mattick J.S."/>
            <person name="Hume D.A."/>
            <person name="Kai C."/>
            <person name="Sasaki D."/>
            <person name="Tomaru Y."/>
            <person name="Fukuda S."/>
            <person name="Kanamori-Katayama M."/>
            <person name="Suzuki M."/>
            <person name="Aoki J."/>
            <person name="Arakawa T."/>
            <person name="Iida J."/>
            <person name="Imamura K."/>
            <person name="Itoh M."/>
            <person name="Kato T."/>
            <person name="Kawaji H."/>
            <person name="Kawagashira N."/>
            <person name="Kawashima T."/>
            <person name="Kojima M."/>
            <person name="Kondo S."/>
            <person name="Konno H."/>
            <person name="Nakano K."/>
            <person name="Ninomiya N."/>
            <person name="Nishio T."/>
            <person name="Okada M."/>
            <person name="Plessy C."/>
            <person name="Shibata K."/>
            <person name="Shiraki T."/>
            <person name="Suzuki S."/>
            <person name="Tagami M."/>
            <person name="Waki K."/>
            <person name="Watahiki A."/>
            <person name="Okamura-Oho Y."/>
            <person name="Suzuki H."/>
            <person name="Kawai J."/>
            <person name="Hayashizaki Y."/>
        </authorList>
    </citation>
    <scope>NUCLEOTIDE SEQUENCE [LARGE SCALE MRNA]</scope>
    <source>
        <strain>C57BL/6J</strain>
        <strain>NOD</strain>
    </source>
</reference>
<reference key="3">
    <citation type="journal article" date="2004" name="Genome Res.">
        <title>The status, quality, and expansion of the NIH full-length cDNA project: the Mammalian Gene Collection (MGC).</title>
        <authorList>
            <consortium name="The MGC Project Team"/>
        </authorList>
    </citation>
    <scope>NUCLEOTIDE SEQUENCE [LARGE SCALE MRNA]</scope>
    <source>
        <tissue>Mammary tumor</tissue>
    </source>
</reference>
<reference key="4">
    <citation type="journal article" date="2010" name="Cell">
        <title>A tissue-specific atlas of mouse protein phosphorylation and expression.</title>
        <authorList>
            <person name="Huttlin E.L."/>
            <person name="Jedrychowski M.P."/>
            <person name="Elias J.E."/>
            <person name="Goswami T."/>
            <person name="Rad R."/>
            <person name="Beausoleil S.A."/>
            <person name="Villen J."/>
            <person name="Haas W."/>
            <person name="Sowa M.E."/>
            <person name="Gygi S.P."/>
        </authorList>
    </citation>
    <scope>IDENTIFICATION BY MASS SPECTROMETRY [LARGE SCALE ANALYSIS]</scope>
    <source>
        <tissue>Brown adipose tissue</tissue>
        <tissue>Heart</tissue>
        <tissue>Kidney</tissue>
        <tissue>Lung</tissue>
        <tissue>Pancreas</tissue>
        <tissue>Spleen</tissue>
        <tissue>Testis</tissue>
    </source>
</reference>
<reference key="5">
    <citation type="journal article" date="2012" name="Cell Cycle">
        <title>The RAX/PACT-PKR stress response pathway promotes p53 sumoylation and activation, leading to G(1) arrest.</title>
        <authorList>
            <person name="Bennett R.L."/>
            <person name="Pan Y."/>
            <person name="Christian J."/>
            <person name="Hui T."/>
            <person name="May W.S. Jr."/>
        </authorList>
    </citation>
    <scope>FUNCTION</scope>
    <scope>INTERACTION WITH UBC9</scope>
</reference>
<accession>Q9WTX2</accession>
<accession>Q9CZB7</accession>
<keyword id="KW-0963">Cytoplasm</keyword>
<keyword id="KW-0597">Phosphoprotein</keyword>
<keyword id="KW-1185">Reference proteome</keyword>
<keyword id="KW-0677">Repeat</keyword>
<keyword id="KW-0694">RNA-binding</keyword>
<keyword id="KW-0943">RNA-mediated gene silencing</keyword>
<organism>
    <name type="scientific">Mus musculus</name>
    <name type="common">Mouse</name>
    <dbReference type="NCBI Taxonomy" id="10090"/>
    <lineage>
        <taxon>Eukaryota</taxon>
        <taxon>Metazoa</taxon>
        <taxon>Chordata</taxon>
        <taxon>Craniata</taxon>
        <taxon>Vertebrata</taxon>
        <taxon>Euteleostomi</taxon>
        <taxon>Mammalia</taxon>
        <taxon>Eutheria</taxon>
        <taxon>Euarchontoglires</taxon>
        <taxon>Glires</taxon>
        <taxon>Rodentia</taxon>
        <taxon>Myomorpha</taxon>
        <taxon>Muroidea</taxon>
        <taxon>Muridae</taxon>
        <taxon>Murinae</taxon>
        <taxon>Mus</taxon>
        <taxon>Mus</taxon>
    </lineage>
</organism>
<feature type="chain" id="PRO_0000223610" description="Interferon-inducible double-stranded RNA-dependent protein kinase activator A">
    <location>
        <begin position="1"/>
        <end position="313"/>
    </location>
</feature>
<feature type="domain" description="DRBM 1" evidence="3">
    <location>
        <begin position="34"/>
        <end position="101"/>
    </location>
</feature>
<feature type="domain" description="DRBM 2" evidence="3">
    <location>
        <begin position="126"/>
        <end position="194"/>
    </location>
</feature>
<feature type="domain" description="DRBM 3" evidence="3">
    <location>
        <begin position="240"/>
        <end position="308"/>
    </location>
</feature>
<feature type="region of interest" description="Sufficient for self-association and interaction with TARBP2" evidence="1">
    <location>
        <begin position="1"/>
        <end position="103"/>
    </location>
</feature>
<feature type="region of interest" description="Disordered" evidence="4">
    <location>
        <begin position="1"/>
        <end position="20"/>
    </location>
</feature>
<feature type="region of interest" description="Sufficient for self-association and interaction with TARBP2" evidence="1">
    <location>
        <begin position="102"/>
        <end position="195"/>
    </location>
</feature>
<feature type="region of interest" description="Sufficient for self-association and interaction with TARBP2" evidence="1">
    <location>
        <begin position="195"/>
        <end position="313"/>
    </location>
</feature>
<feature type="modified residue" description="Phosphoserine" evidence="2">
    <location>
        <position position="18"/>
    </location>
</feature>
<feature type="modified residue" description="Phosphoserine" evidence="2">
    <location>
        <position position="167"/>
    </location>
</feature>
<feature type="modified residue" description="Phosphoserine" evidence="2">
    <location>
        <position position="246"/>
    </location>
</feature>
<feature type="modified residue" description="Phosphoserine" evidence="2">
    <location>
        <position position="287"/>
    </location>
</feature>
<feature type="sequence conflict" description="In Ref. 2; BAB28477." evidence="7" ref="2">
    <original>K</original>
    <variation>N</variation>
    <location>
        <position position="177"/>
    </location>
</feature>